<accession>P29396</accession>
<comment type="function">
    <text>Forms part of the ribosomal stalk which helps the ribosome interact with GTP-bound translation factors. Is thus essential for accurate translation.</text>
</comment>
<comment type="subunit">
    <text evidence="2 3">Homodimer. Part of the 50S ribosomal subunit; present in 6 copies per ribosome. Forms part of the ribosomal stalk which helps the ribosome interact with GTP-bound translation factors. Forms a heptameric L10(L12)2(L12)2(L12)2 complex, where L10 forms an elongated spine to which 3 L12 dimers bind in a sequential fashion.</text>
</comment>
<comment type="mass spectrometry">
    <text>Isolated L10(L12)6.</text>
</comment>
<comment type="mass spectrometry"/>
<comment type="similarity">
    <text evidence="1">Belongs to the bacterial ribosomal protein bL12 family.</text>
</comment>
<comment type="sequence caution" evidence="4">
    <conflict type="erroneous initiation">
        <sequence resource="EMBL-CDS" id="AAD35540"/>
    </conflict>
    <text>Extended N-terminus.</text>
</comment>
<keyword id="KW-0002">3D-structure</keyword>
<keyword id="KW-1185">Reference proteome</keyword>
<keyword id="KW-0687">Ribonucleoprotein</keyword>
<keyword id="KW-0689">Ribosomal protein</keyword>
<sequence>MTIDEIIEAIEKLTVSELAELVKKLEDKFGVTAAAPVAVAAAPVAGAAAGAAQEEKTEFDVVLKSFGQNKIQVIKVVREITGLGLKEAKDLVEKAGSPDAVIKSGVSKEEAEEIKKKLEEAGAEVELK</sequence>
<organism>
    <name type="scientific">Thermotoga maritima (strain ATCC 43589 / DSM 3109 / JCM 10099 / NBRC 100826 / MSB8)</name>
    <dbReference type="NCBI Taxonomy" id="243274"/>
    <lineage>
        <taxon>Bacteria</taxon>
        <taxon>Thermotogati</taxon>
        <taxon>Thermotogota</taxon>
        <taxon>Thermotogae</taxon>
        <taxon>Thermotogales</taxon>
        <taxon>Thermotogaceae</taxon>
        <taxon>Thermotoga</taxon>
    </lineage>
</organism>
<feature type="chain" id="PRO_0000157596" description="Large ribosomal subunit protein bL12">
    <location>
        <begin position="1"/>
        <end position="128"/>
    </location>
</feature>
<feature type="helix" evidence="6">
    <location>
        <begin position="3"/>
        <end position="12"/>
    </location>
</feature>
<feature type="helix" evidence="6">
    <location>
        <begin position="15"/>
        <end position="28"/>
    </location>
</feature>
<feature type="helix" evidence="5">
    <location>
        <begin position="31"/>
        <end position="54"/>
    </location>
</feature>
<feature type="strand" evidence="5">
    <location>
        <begin position="57"/>
        <end position="65"/>
    </location>
</feature>
<feature type="helix" evidence="5">
    <location>
        <begin position="70"/>
        <end position="81"/>
    </location>
</feature>
<feature type="helix" evidence="5">
    <location>
        <begin position="85"/>
        <end position="92"/>
    </location>
</feature>
<feature type="turn" evidence="5">
    <location>
        <begin position="93"/>
        <end position="96"/>
    </location>
</feature>
<feature type="strand" evidence="5">
    <location>
        <begin position="101"/>
        <end position="106"/>
    </location>
</feature>
<feature type="helix" evidence="5">
    <location>
        <begin position="108"/>
        <end position="120"/>
    </location>
</feature>
<feature type="strand" evidence="5">
    <location>
        <begin position="124"/>
        <end position="128"/>
    </location>
</feature>
<protein>
    <recommendedName>
        <fullName evidence="1">Large ribosomal subunit protein bL12</fullName>
    </recommendedName>
    <alternativeName>
        <fullName evidence="4">50S ribosomal protein L7/L12</fullName>
    </alternativeName>
</protein>
<dbReference type="EMBL" id="Z11839">
    <property type="protein sequence ID" value="CAA77862.1"/>
    <property type="molecule type" value="Genomic_DNA"/>
</dbReference>
<dbReference type="EMBL" id="X72695">
    <property type="protein sequence ID" value="CAA51245.1"/>
    <property type="molecule type" value="Genomic_DNA"/>
</dbReference>
<dbReference type="EMBL" id="AE000512">
    <property type="protein sequence ID" value="AAD35540.1"/>
    <property type="status" value="ALT_INIT"/>
    <property type="molecule type" value="Genomic_DNA"/>
</dbReference>
<dbReference type="PIR" id="E44466">
    <property type="entry name" value="R7HG12"/>
</dbReference>
<dbReference type="RefSeq" id="NP_228267.1">
    <property type="nucleotide sequence ID" value="NC_000853.1"/>
</dbReference>
<dbReference type="RefSeq" id="WP_004081509.1">
    <property type="nucleotide sequence ID" value="NZ_CP011107.1"/>
</dbReference>
<dbReference type="PDB" id="1DD3">
    <property type="method" value="X-ray"/>
    <property type="resolution" value="2.00 A"/>
    <property type="chains" value="A/B=1-128, C/D=1-32"/>
</dbReference>
<dbReference type="PDB" id="1DD4">
    <property type="method" value="X-ray"/>
    <property type="resolution" value="2.40 A"/>
    <property type="chains" value="A/B=1-128, C/D=1-40"/>
</dbReference>
<dbReference type="PDB" id="1ZAV">
    <property type="method" value="X-ray"/>
    <property type="resolution" value="1.90 A"/>
    <property type="chains" value="U/V/W/X/Y/Z=1-30"/>
</dbReference>
<dbReference type="PDB" id="1ZAW">
    <property type="method" value="X-ray"/>
    <property type="resolution" value="2.30 A"/>
    <property type="chains" value="U/V/W/X/Y/Z=1-30"/>
</dbReference>
<dbReference type="PDB" id="1ZAX">
    <property type="method" value="X-ray"/>
    <property type="resolution" value="2.10 A"/>
    <property type="chains" value="U/V/W/X/Y/Z=1-30"/>
</dbReference>
<dbReference type="PDB" id="4V42">
    <property type="method" value="X-ray"/>
    <property type="resolution" value="5.50 A"/>
    <property type="chains" value="BI/BJ=1-128"/>
</dbReference>
<dbReference type="PDBsum" id="1DD3"/>
<dbReference type="PDBsum" id="1DD4"/>
<dbReference type="PDBsum" id="1ZAV"/>
<dbReference type="PDBsum" id="1ZAW"/>
<dbReference type="PDBsum" id="1ZAX"/>
<dbReference type="PDBsum" id="4V42"/>
<dbReference type="SMR" id="P29396"/>
<dbReference type="FunCoup" id="P29396">
    <property type="interactions" value="377"/>
</dbReference>
<dbReference type="IntAct" id="P29396">
    <property type="interactions" value="1"/>
</dbReference>
<dbReference type="STRING" id="243274.TM_0457"/>
<dbReference type="PaxDb" id="243274-THEMA_02405"/>
<dbReference type="EnsemblBacteria" id="AAD35540">
    <property type="protein sequence ID" value="AAD35540"/>
    <property type="gene ID" value="TM_0457"/>
</dbReference>
<dbReference type="KEGG" id="tma:TM0457"/>
<dbReference type="KEGG" id="tmi:THEMA_02405"/>
<dbReference type="KEGG" id="tmm:Tmari_0454"/>
<dbReference type="KEGG" id="tmw:THMA_0467"/>
<dbReference type="PATRIC" id="fig|243274.5.peg.464"/>
<dbReference type="eggNOG" id="COG0222">
    <property type="taxonomic scope" value="Bacteria"/>
</dbReference>
<dbReference type="InParanoid" id="P29396"/>
<dbReference type="OrthoDB" id="9811748at2"/>
<dbReference type="EvolutionaryTrace" id="P29396"/>
<dbReference type="Proteomes" id="UP000008183">
    <property type="component" value="Chromosome"/>
</dbReference>
<dbReference type="GO" id="GO:0022625">
    <property type="term" value="C:cytosolic large ribosomal subunit"/>
    <property type="evidence" value="ECO:0000318"/>
    <property type="project" value="GO_Central"/>
</dbReference>
<dbReference type="GO" id="GO:0003729">
    <property type="term" value="F:mRNA binding"/>
    <property type="evidence" value="ECO:0000318"/>
    <property type="project" value="GO_Central"/>
</dbReference>
<dbReference type="GO" id="GO:0003735">
    <property type="term" value="F:structural constituent of ribosome"/>
    <property type="evidence" value="ECO:0000318"/>
    <property type="project" value="GO_Central"/>
</dbReference>
<dbReference type="GO" id="GO:0006412">
    <property type="term" value="P:translation"/>
    <property type="evidence" value="ECO:0000318"/>
    <property type="project" value="GO_Central"/>
</dbReference>
<dbReference type="CDD" id="cd00387">
    <property type="entry name" value="Ribosomal_L7_L12"/>
    <property type="match status" value="1"/>
</dbReference>
<dbReference type="FunFam" id="1.20.5.710:FF:000008">
    <property type="entry name" value="50S ribosomal protein L7/L12"/>
    <property type="match status" value="1"/>
</dbReference>
<dbReference type="FunFam" id="3.30.1390.10:FF:000001">
    <property type="entry name" value="50S ribosomal protein L7/L12"/>
    <property type="match status" value="1"/>
</dbReference>
<dbReference type="Gene3D" id="3.30.1390.10">
    <property type="match status" value="1"/>
</dbReference>
<dbReference type="Gene3D" id="1.20.5.710">
    <property type="entry name" value="Single helix bin"/>
    <property type="match status" value="1"/>
</dbReference>
<dbReference type="HAMAP" id="MF_00368">
    <property type="entry name" value="Ribosomal_bL12"/>
    <property type="match status" value="1"/>
</dbReference>
<dbReference type="InterPro" id="IPR000206">
    <property type="entry name" value="Ribosomal_bL12"/>
</dbReference>
<dbReference type="InterPro" id="IPR013823">
    <property type="entry name" value="Ribosomal_bL12_C"/>
</dbReference>
<dbReference type="InterPro" id="IPR014719">
    <property type="entry name" value="Ribosomal_bL12_C/ClpS-like"/>
</dbReference>
<dbReference type="InterPro" id="IPR008932">
    <property type="entry name" value="Ribosomal_bL12_oligo"/>
</dbReference>
<dbReference type="InterPro" id="IPR036235">
    <property type="entry name" value="Ribosomal_bL12_oligo_N_sf"/>
</dbReference>
<dbReference type="NCBIfam" id="TIGR00855">
    <property type="entry name" value="L12"/>
    <property type="match status" value="1"/>
</dbReference>
<dbReference type="PANTHER" id="PTHR45987">
    <property type="entry name" value="39S RIBOSOMAL PROTEIN L12"/>
    <property type="match status" value="1"/>
</dbReference>
<dbReference type="PANTHER" id="PTHR45987:SF4">
    <property type="entry name" value="LARGE RIBOSOMAL SUBUNIT PROTEIN BL12M"/>
    <property type="match status" value="1"/>
</dbReference>
<dbReference type="Pfam" id="PF00542">
    <property type="entry name" value="Ribosomal_L12"/>
    <property type="match status" value="1"/>
</dbReference>
<dbReference type="Pfam" id="PF16320">
    <property type="entry name" value="Ribosomal_L12_N"/>
    <property type="match status" value="1"/>
</dbReference>
<dbReference type="SUPFAM" id="SSF54736">
    <property type="entry name" value="ClpS-like"/>
    <property type="match status" value="1"/>
</dbReference>
<dbReference type="SUPFAM" id="SSF48300">
    <property type="entry name" value="Ribosomal protein L7/12, oligomerisation (N-terminal) domain"/>
    <property type="match status" value="1"/>
</dbReference>
<reference key="1">
    <citation type="journal article" date="1992" name="J. Biol. Chem.">
        <title>The organization and expression of essential transcription translation component genes in the extremely thermophilic eubacterium Thermotoga maritima.</title>
        <authorList>
            <person name="Liao D."/>
            <person name="Dennis P.P."/>
        </authorList>
    </citation>
    <scope>NUCLEOTIDE SEQUENCE [GENOMIC DNA]</scope>
    <source>
        <strain>ATCC 43589 / DSM 3109 / JCM 10099 / NBRC 100826 / MSB8</strain>
    </source>
</reference>
<reference key="2">
    <citation type="journal article" date="1993" name="Nucleic Acids Res.">
        <title>The DNA-dependent RNA-polymerase of Thermotoga maritima; characterisation of the enzyme and the DNA-sequence of the genes for the large subunits.</title>
        <authorList>
            <person name="Palm P."/>
            <person name="Schleper C."/>
            <person name="Arnold-Ammer I."/>
            <person name="Holz I."/>
            <person name="Meier T."/>
            <person name="Lottspeich F."/>
            <person name="Zillig W."/>
        </authorList>
    </citation>
    <scope>NUCLEOTIDE SEQUENCE [GENOMIC DNA]</scope>
    <source>
        <strain>ATCC 43589 / DSM 3109 / JCM 10099 / NBRC 100826 / MSB8</strain>
    </source>
</reference>
<reference key="3">
    <citation type="journal article" date="1999" name="Nature">
        <title>Evidence for lateral gene transfer between Archaea and Bacteria from genome sequence of Thermotoga maritima.</title>
        <authorList>
            <person name="Nelson K.E."/>
            <person name="Clayton R.A."/>
            <person name="Gill S.R."/>
            <person name="Gwinn M.L."/>
            <person name="Dodson R.J."/>
            <person name="Haft D.H."/>
            <person name="Hickey E.K."/>
            <person name="Peterson J.D."/>
            <person name="Nelson W.C."/>
            <person name="Ketchum K.A."/>
            <person name="McDonald L.A."/>
            <person name="Utterback T.R."/>
            <person name="Malek J.A."/>
            <person name="Linher K.D."/>
            <person name="Garrett M.M."/>
            <person name="Stewart A.M."/>
            <person name="Cotton M.D."/>
            <person name="Pratt M.S."/>
            <person name="Phillips C.A."/>
            <person name="Richardson D.L."/>
            <person name="Heidelberg J.F."/>
            <person name="Sutton G.G."/>
            <person name="Fleischmann R.D."/>
            <person name="Eisen J.A."/>
            <person name="White O."/>
            <person name="Salzberg S.L."/>
            <person name="Smith H.O."/>
            <person name="Venter J.C."/>
            <person name="Fraser C.M."/>
        </authorList>
    </citation>
    <scope>NUCLEOTIDE SEQUENCE [LARGE SCALE GENOMIC DNA]</scope>
    <source>
        <strain>ATCC 43589 / DSM 3109 / JCM 10099 / NBRC 100826 / MSB8</strain>
    </source>
</reference>
<reference key="4">
    <citation type="journal article" date="2005" name="Proc. Natl. Acad. Sci. U.S.A.">
        <title>Heptameric (L12)6/L10 rather than canonical pentameric complexes are found by tandem MS of intact ribosomes from thermophilic bacteria.</title>
        <authorList>
            <person name="Ilag L.L."/>
            <person name="Videler H."/>
            <person name="McKay A.R."/>
            <person name="Sobott F."/>
            <person name="Fucini P."/>
            <person name="Nierhaus K.H."/>
            <person name="Robinson C.V."/>
        </authorList>
    </citation>
    <scope>SUBUNIT</scope>
    <scope>STOICHIOMETRY</scope>
    <scope>MASS SPECTROMETRY</scope>
</reference>
<reference key="5">
    <citation type="journal article" date="2000" name="EMBO J.">
        <title>Flexibility, conformational diversity and two dimerization modes in complexes of ribosomal protein L12.</title>
        <authorList>
            <person name="Wahl M.C."/>
            <person name="Bourenkov G.P."/>
            <person name="Bartunik H.D."/>
            <person name="Huber R."/>
        </authorList>
    </citation>
    <scope>X-RAY CRYSTALLOGRAPHY (2.0 ANGSTROMS)</scope>
    <source>
        <strain>ATCC 43589 / DSM 3109 / JCM 10099 / NBRC 100826 / MSB8</strain>
    </source>
</reference>
<reference key="6">
    <citation type="journal article" date="2005" name="Cell">
        <title>Structural basis for the function of the ribosomal L7/12 stalk in factor binding and GTPase activation.</title>
        <authorList>
            <person name="Diaconu M."/>
            <person name="Kothe U."/>
            <person name="Schlunzen F."/>
            <person name="Fischer N."/>
            <person name="Harms J.M."/>
            <person name="Tonevitsky A.G."/>
            <person name="Stark H."/>
            <person name="Rodnina M.V."/>
            <person name="Wahl M.C."/>
        </authorList>
    </citation>
    <scope>X-RAY CRYSTALLOGRAPHY (1.9 ANGSTROMS) OF 1-30</scope>
    <scope>INTERACTION WITH L10 (RPLJ)</scope>
    <scope>SUBUNIT</scope>
</reference>
<gene>
    <name evidence="1" type="primary">rplL</name>
    <name type="ordered locus">TM_0457</name>
</gene>
<proteinExistence type="evidence at protein level"/>
<name>RL7_THEMA</name>
<evidence type="ECO:0000255" key="1">
    <source>
        <dbReference type="HAMAP-Rule" id="MF_00368"/>
    </source>
</evidence>
<evidence type="ECO:0000269" key="2">
    <source>
    </source>
</evidence>
<evidence type="ECO:0000269" key="3">
    <source>
    </source>
</evidence>
<evidence type="ECO:0000305" key="4"/>
<evidence type="ECO:0007829" key="5">
    <source>
        <dbReference type="PDB" id="1DD3"/>
    </source>
</evidence>
<evidence type="ECO:0007829" key="6">
    <source>
        <dbReference type="PDB" id="1ZAV"/>
    </source>
</evidence>